<name>RPIA_TREDE</name>
<accession>Q73M68</accession>
<sequence>MDTSQLKERVAYHAIDTLFSEGKIFDGMKIGLGTGSTAMPAVHRLAQLLSSGKLKKIYAVPTSFQTSIECEKLGIPIYSLSSQQIGGSLDLAIDGADEIDPDKNLIKGGGAALLKEKIIAYNSKEFVVIADERKKVKSMGKGFALPIEIIPEARLSITKALEAQGIEVFLREGVKKMGPVVTDNGNFIIDVKWPKAADVDPKALEESLNKITGVVENGFFTKNTPRVFIVHQDGNIEDL</sequence>
<gene>
    <name evidence="1" type="primary">rpiA</name>
    <name type="ordered locus">TDE_1641</name>
</gene>
<dbReference type="EC" id="5.3.1.6" evidence="1"/>
<dbReference type="EMBL" id="AE017226">
    <property type="protein sequence ID" value="AAS12158.1"/>
    <property type="molecule type" value="Genomic_DNA"/>
</dbReference>
<dbReference type="RefSeq" id="NP_972247.1">
    <property type="nucleotide sequence ID" value="NC_002967.9"/>
</dbReference>
<dbReference type="RefSeq" id="WP_002679325.1">
    <property type="nucleotide sequence ID" value="NC_002967.9"/>
</dbReference>
<dbReference type="SMR" id="Q73M68"/>
<dbReference type="STRING" id="243275.TDE_1641"/>
<dbReference type="PaxDb" id="243275-TDE_1641"/>
<dbReference type="GeneID" id="2739750"/>
<dbReference type="KEGG" id="tde:TDE_1641"/>
<dbReference type="PATRIC" id="fig|243275.7.peg.1569"/>
<dbReference type="eggNOG" id="COG0120">
    <property type="taxonomic scope" value="Bacteria"/>
</dbReference>
<dbReference type="HOGENOM" id="CLU_056590_1_1_12"/>
<dbReference type="OrthoDB" id="5870696at2"/>
<dbReference type="UniPathway" id="UPA00115">
    <property type="reaction ID" value="UER00412"/>
</dbReference>
<dbReference type="Proteomes" id="UP000008212">
    <property type="component" value="Chromosome"/>
</dbReference>
<dbReference type="GO" id="GO:0005829">
    <property type="term" value="C:cytosol"/>
    <property type="evidence" value="ECO:0007669"/>
    <property type="project" value="TreeGrafter"/>
</dbReference>
<dbReference type="GO" id="GO:0004751">
    <property type="term" value="F:ribose-5-phosphate isomerase activity"/>
    <property type="evidence" value="ECO:0007669"/>
    <property type="project" value="UniProtKB-UniRule"/>
</dbReference>
<dbReference type="GO" id="GO:0006014">
    <property type="term" value="P:D-ribose metabolic process"/>
    <property type="evidence" value="ECO:0007669"/>
    <property type="project" value="TreeGrafter"/>
</dbReference>
<dbReference type="GO" id="GO:0009052">
    <property type="term" value="P:pentose-phosphate shunt, non-oxidative branch"/>
    <property type="evidence" value="ECO:0007669"/>
    <property type="project" value="UniProtKB-UniRule"/>
</dbReference>
<dbReference type="CDD" id="cd01398">
    <property type="entry name" value="RPI_A"/>
    <property type="match status" value="1"/>
</dbReference>
<dbReference type="FunFam" id="3.40.50.1360:FF:000001">
    <property type="entry name" value="Ribose-5-phosphate isomerase A"/>
    <property type="match status" value="1"/>
</dbReference>
<dbReference type="Gene3D" id="3.30.70.260">
    <property type="match status" value="1"/>
</dbReference>
<dbReference type="Gene3D" id="3.40.50.1360">
    <property type="match status" value="1"/>
</dbReference>
<dbReference type="HAMAP" id="MF_00170">
    <property type="entry name" value="Rib_5P_isom_A"/>
    <property type="match status" value="1"/>
</dbReference>
<dbReference type="InterPro" id="IPR037171">
    <property type="entry name" value="NagB/RpiA_transferase-like"/>
</dbReference>
<dbReference type="InterPro" id="IPR020672">
    <property type="entry name" value="Ribose5P_isomerase_typA_subgr"/>
</dbReference>
<dbReference type="InterPro" id="IPR004788">
    <property type="entry name" value="Ribose5P_isomerase_type_A"/>
</dbReference>
<dbReference type="NCBIfam" id="NF001924">
    <property type="entry name" value="PRK00702.1"/>
    <property type="match status" value="1"/>
</dbReference>
<dbReference type="NCBIfam" id="TIGR00021">
    <property type="entry name" value="rpiA"/>
    <property type="match status" value="1"/>
</dbReference>
<dbReference type="PANTHER" id="PTHR11934">
    <property type="entry name" value="RIBOSE-5-PHOSPHATE ISOMERASE"/>
    <property type="match status" value="1"/>
</dbReference>
<dbReference type="PANTHER" id="PTHR11934:SF0">
    <property type="entry name" value="RIBOSE-5-PHOSPHATE ISOMERASE"/>
    <property type="match status" value="1"/>
</dbReference>
<dbReference type="Pfam" id="PF06026">
    <property type="entry name" value="Rib_5-P_isom_A"/>
    <property type="match status" value="1"/>
</dbReference>
<dbReference type="SUPFAM" id="SSF75445">
    <property type="entry name" value="D-ribose-5-phosphate isomerase (RpiA), lid domain"/>
    <property type="match status" value="1"/>
</dbReference>
<dbReference type="SUPFAM" id="SSF100950">
    <property type="entry name" value="NagB/RpiA/CoA transferase-like"/>
    <property type="match status" value="1"/>
</dbReference>
<organism>
    <name type="scientific">Treponema denticola (strain ATCC 35405 / DSM 14222 / CIP 103919 / JCM 8153 / KCTC 15104)</name>
    <dbReference type="NCBI Taxonomy" id="243275"/>
    <lineage>
        <taxon>Bacteria</taxon>
        <taxon>Pseudomonadati</taxon>
        <taxon>Spirochaetota</taxon>
        <taxon>Spirochaetia</taxon>
        <taxon>Spirochaetales</taxon>
        <taxon>Treponemataceae</taxon>
        <taxon>Treponema</taxon>
    </lineage>
</organism>
<proteinExistence type="inferred from homology"/>
<evidence type="ECO:0000255" key="1">
    <source>
        <dbReference type="HAMAP-Rule" id="MF_00170"/>
    </source>
</evidence>
<comment type="function">
    <text evidence="1">Catalyzes the reversible conversion of ribose-5-phosphate to ribulose 5-phosphate.</text>
</comment>
<comment type="catalytic activity">
    <reaction evidence="1">
        <text>aldehydo-D-ribose 5-phosphate = D-ribulose 5-phosphate</text>
        <dbReference type="Rhea" id="RHEA:14657"/>
        <dbReference type="ChEBI" id="CHEBI:58121"/>
        <dbReference type="ChEBI" id="CHEBI:58273"/>
        <dbReference type="EC" id="5.3.1.6"/>
    </reaction>
</comment>
<comment type="pathway">
    <text evidence="1">Carbohydrate degradation; pentose phosphate pathway; D-ribose 5-phosphate from D-ribulose 5-phosphate (non-oxidative stage): step 1/1.</text>
</comment>
<comment type="subunit">
    <text evidence="1">Homodimer.</text>
</comment>
<comment type="similarity">
    <text evidence="1">Belongs to the ribose 5-phosphate isomerase family.</text>
</comment>
<protein>
    <recommendedName>
        <fullName evidence="1">Ribose-5-phosphate isomerase A</fullName>
        <ecNumber evidence="1">5.3.1.6</ecNumber>
    </recommendedName>
    <alternativeName>
        <fullName evidence="1">Phosphoriboisomerase A</fullName>
        <shortName evidence="1">PRI</shortName>
    </alternativeName>
</protein>
<keyword id="KW-0413">Isomerase</keyword>
<keyword id="KW-1185">Reference proteome</keyword>
<reference key="1">
    <citation type="journal article" date="2004" name="Proc. Natl. Acad. Sci. U.S.A.">
        <title>Comparison of the genome of the oral pathogen Treponema denticola with other spirochete genomes.</title>
        <authorList>
            <person name="Seshadri R."/>
            <person name="Myers G.S.A."/>
            <person name="Tettelin H."/>
            <person name="Eisen J.A."/>
            <person name="Heidelberg J.F."/>
            <person name="Dodson R.J."/>
            <person name="Davidsen T.M."/>
            <person name="DeBoy R.T."/>
            <person name="Fouts D.E."/>
            <person name="Haft D.H."/>
            <person name="Selengut J."/>
            <person name="Ren Q."/>
            <person name="Brinkac L.M."/>
            <person name="Madupu R."/>
            <person name="Kolonay J.F."/>
            <person name="Durkin S.A."/>
            <person name="Daugherty S.C."/>
            <person name="Shetty J."/>
            <person name="Shvartsbeyn A."/>
            <person name="Gebregeorgis E."/>
            <person name="Geer K."/>
            <person name="Tsegaye G."/>
            <person name="Malek J.A."/>
            <person name="Ayodeji B."/>
            <person name="Shatsman S."/>
            <person name="McLeod M.P."/>
            <person name="Smajs D."/>
            <person name="Howell J.K."/>
            <person name="Pal S."/>
            <person name="Amin A."/>
            <person name="Vashisth P."/>
            <person name="McNeill T.Z."/>
            <person name="Xiang Q."/>
            <person name="Sodergren E."/>
            <person name="Baca E."/>
            <person name="Weinstock G.M."/>
            <person name="Norris S.J."/>
            <person name="Fraser C.M."/>
            <person name="Paulsen I.T."/>
        </authorList>
    </citation>
    <scope>NUCLEOTIDE SEQUENCE [LARGE SCALE GENOMIC DNA]</scope>
    <source>
        <strain>ATCC 35405 / DSM 14222 / CIP 103919 / JCM 8153 / KCTC 15104</strain>
    </source>
</reference>
<feature type="chain" id="PRO_0000158488" description="Ribose-5-phosphate isomerase A">
    <location>
        <begin position="1"/>
        <end position="239"/>
    </location>
</feature>
<feature type="active site" description="Proton acceptor" evidence="1">
    <location>
        <position position="116"/>
    </location>
</feature>
<feature type="binding site" evidence="1">
    <location>
        <begin position="34"/>
        <end position="37"/>
    </location>
    <ligand>
        <name>substrate</name>
    </ligand>
</feature>
<feature type="binding site" evidence="1">
    <location>
        <begin position="94"/>
        <end position="97"/>
    </location>
    <ligand>
        <name>substrate</name>
    </ligand>
</feature>
<feature type="binding site" evidence="1">
    <location>
        <begin position="107"/>
        <end position="110"/>
    </location>
    <ligand>
        <name>substrate</name>
    </ligand>
</feature>
<feature type="binding site" evidence="1">
    <location>
        <position position="134"/>
    </location>
    <ligand>
        <name>substrate</name>
    </ligand>
</feature>